<organism>
    <name type="scientific">Bacillus thuringiensis (strain Al Hakam)</name>
    <dbReference type="NCBI Taxonomy" id="412694"/>
    <lineage>
        <taxon>Bacteria</taxon>
        <taxon>Bacillati</taxon>
        <taxon>Bacillota</taxon>
        <taxon>Bacilli</taxon>
        <taxon>Bacillales</taxon>
        <taxon>Bacillaceae</taxon>
        <taxon>Bacillus</taxon>
        <taxon>Bacillus cereus group</taxon>
    </lineage>
</organism>
<protein>
    <recommendedName>
        <fullName evidence="1">NADH-quinone oxidoreductase subunit D</fullName>
        <ecNumber evidence="1">7.1.1.-</ecNumber>
    </recommendedName>
    <alternativeName>
        <fullName evidence="1">NADH dehydrogenase I subunit D</fullName>
    </alternativeName>
    <alternativeName>
        <fullName evidence="1">NDH-1 subunit D</fullName>
    </alternativeName>
</protein>
<evidence type="ECO:0000255" key="1">
    <source>
        <dbReference type="HAMAP-Rule" id="MF_01358"/>
    </source>
</evidence>
<reference key="1">
    <citation type="journal article" date="2007" name="J. Bacteriol.">
        <title>The complete genome sequence of Bacillus thuringiensis Al Hakam.</title>
        <authorList>
            <person name="Challacombe J.F."/>
            <person name="Altherr M.R."/>
            <person name="Xie G."/>
            <person name="Bhotika S.S."/>
            <person name="Brown N."/>
            <person name="Bruce D."/>
            <person name="Campbell C.S."/>
            <person name="Campbell M.L."/>
            <person name="Chen J."/>
            <person name="Chertkov O."/>
            <person name="Cleland C."/>
            <person name="Dimitrijevic M."/>
            <person name="Doggett N.A."/>
            <person name="Fawcett J.J."/>
            <person name="Glavina T."/>
            <person name="Goodwin L.A."/>
            <person name="Green L.D."/>
            <person name="Han C.S."/>
            <person name="Hill K.K."/>
            <person name="Hitchcock P."/>
            <person name="Jackson P.J."/>
            <person name="Keim P."/>
            <person name="Kewalramani A.R."/>
            <person name="Longmire J."/>
            <person name="Lucas S."/>
            <person name="Malfatti S."/>
            <person name="Martinez D."/>
            <person name="McMurry K."/>
            <person name="Meincke L.J."/>
            <person name="Misra M."/>
            <person name="Moseman B.L."/>
            <person name="Mundt M."/>
            <person name="Munk A.C."/>
            <person name="Okinaka R.T."/>
            <person name="Parson-Quintana B."/>
            <person name="Reilly L.P."/>
            <person name="Richardson P."/>
            <person name="Robinson D.L."/>
            <person name="Saunders E."/>
            <person name="Tapia R."/>
            <person name="Tesmer J.G."/>
            <person name="Thayer N."/>
            <person name="Thompson L.S."/>
            <person name="Tice H."/>
            <person name="Ticknor L.O."/>
            <person name="Wills P.L."/>
            <person name="Gilna P."/>
            <person name="Brettin T.S."/>
        </authorList>
    </citation>
    <scope>NUCLEOTIDE SEQUENCE [LARGE SCALE GENOMIC DNA]</scope>
    <source>
        <strain>Al Hakam</strain>
    </source>
</reference>
<keyword id="KW-1003">Cell membrane</keyword>
<keyword id="KW-0472">Membrane</keyword>
<keyword id="KW-0520">NAD</keyword>
<keyword id="KW-0874">Quinone</keyword>
<keyword id="KW-1278">Translocase</keyword>
<keyword id="KW-0813">Transport</keyword>
<name>NUOD_BACAH</name>
<feature type="chain" id="PRO_0000357768" description="NADH-quinone oxidoreductase subunit D">
    <location>
        <begin position="1"/>
        <end position="366"/>
    </location>
</feature>
<proteinExistence type="inferred from homology"/>
<dbReference type="EC" id="7.1.1.-" evidence="1"/>
<dbReference type="EMBL" id="CP000485">
    <property type="protein sequence ID" value="ABK87981.1"/>
    <property type="molecule type" value="Genomic_DNA"/>
</dbReference>
<dbReference type="RefSeq" id="WP_000621426.1">
    <property type="nucleotide sequence ID" value="NC_008600.1"/>
</dbReference>
<dbReference type="SMR" id="A0RL88"/>
<dbReference type="KEGG" id="btl:BALH_4800"/>
<dbReference type="HOGENOM" id="CLU_015134_1_2_9"/>
<dbReference type="GO" id="GO:0005886">
    <property type="term" value="C:plasma membrane"/>
    <property type="evidence" value="ECO:0007669"/>
    <property type="project" value="UniProtKB-SubCell"/>
</dbReference>
<dbReference type="GO" id="GO:0051287">
    <property type="term" value="F:NAD binding"/>
    <property type="evidence" value="ECO:0007669"/>
    <property type="project" value="InterPro"/>
</dbReference>
<dbReference type="GO" id="GO:0050136">
    <property type="term" value="F:NADH:ubiquinone reductase (non-electrogenic) activity"/>
    <property type="evidence" value="ECO:0007669"/>
    <property type="project" value="UniProtKB-UniRule"/>
</dbReference>
<dbReference type="GO" id="GO:0048038">
    <property type="term" value="F:quinone binding"/>
    <property type="evidence" value="ECO:0007669"/>
    <property type="project" value="UniProtKB-KW"/>
</dbReference>
<dbReference type="FunFam" id="1.10.645.10:FF:000006">
    <property type="entry name" value="NADH-quinone oxidoreductase subunit D"/>
    <property type="match status" value="1"/>
</dbReference>
<dbReference type="Gene3D" id="1.10.645.10">
    <property type="entry name" value="Cytochrome-c3 Hydrogenase, chain B"/>
    <property type="match status" value="1"/>
</dbReference>
<dbReference type="HAMAP" id="MF_01358">
    <property type="entry name" value="NDH1_NuoD"/>
    <property type="match status" value="1"/>
</dbReference>
<dbReference type="InterPro" id="IPR001135">
    <property type="entry name" value="NADH_Q_OxRdtase_suD"/>
</dbReference>
<dbReference type="InterPro" id="IPR022885">
    <property type="entry name" value="NDH1_su_D/H"/>
</dbReference>
<dbReference type="InterPro" id="IPR029014">
    <property type="entry name" value="NiFe-Hase_large"/>
</dbReference>
<dbReference type="NCBIfam" id="NF004739">
    <property type="entry name" value="PRK06075.1"/>
    <property type="match status" value="1"/>
</dbReference>
<dbReference type="NCBIfam" id="NF008974">
    <property type="entry name" value="PRK12322.1"/>
    <property type="match status" value="1"/>
</dbReference>
<dbReference type="PANTHER" id="PTHR11993:SF10">
    <property type="entry name" value="NADH DEHYDROGENASE [UBIQUINONE] IRON-SULFUR PROTEIN 2, MITOCHONDRIAL"/>
    <property type="match status" value="1"/>
</dbReference>
<dbReference type="PANTHER" id="PTHR11993">
    <property type="entry name" value="NADH-UBIQUINONE OXIDOREDUCTASE 49 KDA SUBUNIT"/>
    <property type="match status" value="1"/>
</dbReference>
<dbReference type="Pfam" id="PF00346">
    <property type="entry name" value="Complex1_49kDa"/>
    <property type="match status" value="2"/>
</dbReference>
<dbReference type="SUPFAM" id="SSF56762">
    <property type="entry name" value="HydB/Nqo4-like"/>
    <property type="match status" value="1"/>
</dbReference>
<gene>
    <name evidence="1" type="primary">nuoD</name>
    <name type="ordered locus">BALH_4800</name>
</gene>
<sequence length="366" mass="41487">MIRTEEMLLNVGPQHPSTHGVFRLVIKIDGEIIKEATPVIGYLHRGTEKIAESLQYTQIIPYTDRMDYLSAMTNNYVICHAVETMIGLEIPERAEYLRVLAMELGRIASHLVWWGTNLLDIGAVSPFLYAFREREMIINLLNELCGARLTFNYMRVGGVKWDAPDGWIEKVEEFVPYMREQLAGYHDLVSGNEIFLNRVKGVGIYSAEEAISYSLSGANLRCTGVNWDLRKDEPYSIYNRFDFDIPVGSVGDAWDRYVCRMQEIEESLKIVEQAVQQFPKEGAVLAKVPKIIKAPKGEAFVRIESPRGEIGCYIASDGKKEPYRLKFRRPSFYNLQILPKLLKGENIANLITILGGVDIVLGEVDG</sequence>
<accession>A0RL88</accession>
<comment type="function">
    <text evidence="1">NDH-1 shuttles electrons from NADH, via FMN and iron-sulfur (Fe-S) centers, to quinones in the respiratory chain. The immediate electron acceptor for the enzyme in this species is believed to be a menaquinone. Couples the redox reaction to proton translocation (for every two electrons transferred, four hydrogen ions are translocated across the cytoplasmic membrane), and thus conserves the redox energy in a proton gradient.</text>
</comment>
<comment type="catalytic activity">
    <reaction evidence="1">
        <text>a quinone + NADH + 5 H(+)(in) = a quinol + NAD(+) + 4 H(+)(out)</text>
        <dbReference type="Rhea" id="RHEA:57888"/>
        <dbReference type="ChEBI" id="CHEBI:15378"/>
        <dbReference type="ChEBI" id="CHEBI:24646"/>
        <dbReference type="ChEBI" id="CHEBI:57540"/>
        <dbReference type="ChEBI" id="CHEBI:57945"/>
        <dbReference type="ChEBI" id="CHEBI:132124"/>
    </reaction>
</comment>
<comment type="subunit">
    <text evidence="1">NDH-1 is composed of 14 different subunits. Subunits NuoB, C, D, E, F, and G constitute the peripheral sector of the complex.</text>
</comment>
<comment type="subcellular location">
    <subcellularLocation>
        <location evidence="1">Cell membrane</location>
        <topology evidence="1">Peripheral membrane protein</topology>
        <orientation evidence="1">Cytoplasmic side</orientation>
    </subcellularLocation>
</comment>
<comment type="similarity">
    <text evidence="1">Belongs to the complex I 49 kDa subunit family.</text>
</comment>